<dbReference type="EMBL" id="DQ138333">
    <property type="protein sequence ID" value="AAZ30411.1"/>
    <property type="molecule type" value="mRNA"/>
</dbReference>
<dbReference type="SMR" id="P0DKE8"/>
<dbReference type="GO" id="GO:0005938">
    <property type="term" value="C:cell cortex"/>
    <property type="evidence" value="ECO:0007669"/>
    <property type="project" value="TreeGrafter"/>
</dbReference>
<dbReference type="GO" id="GO:0005856">
    <property type="term" value="C:cytoskeleton"/>
    <property type="evidence" value="ECO:0007669"/>
    <property type="project" value="UniProtKB-SubCell"/>
</dbReference>
<dbReference type="GO" id="GO:0003785">
    <property type="term" value="F:actin monomer binding"/>
    <property type="evidence" value="ECO:0007669"/>
    <property type="project" value="TreeGrafter"/>
</dbReference>
<dbReference type="CDD" id="cd00148">
    <property type="entry name" value="PROF"/>
    <property type="match status" value="1"/>
</dbReference>
<dbReference type="FunFam" id="3.30.450.30:FF:000001">
    <property type="entry name" value="Profilin"/>
    <property type="match status" value="1"/>
</dbReference>
<dbReference type="Gene3D" id="3.30.450.30">
    <property type="entry name" value="Dynein light chain 2a, cytoplasmic"/>
    <property type="match status" value="1"/>
</dbReference>
<dbReference type="InterPro" id="IPR048278">
    <property type="entry name" value="PFN"/>
</dbReference>
<dbReference type="InterPro" id="IPR005455">
    <property type="entry name" value="PFN_euk"/>
</dbReference>
<dbReference type="InterPro" id="IPR036140">
    <property type="entry name" value="PFN_sf"/>
</dbReference>
<dbReference type="InterPro" id="IPR027310">
    <property type="entry name" value="Profilin_CS"/>
</dbReference>
<dbReference type="PANTHER" id="PTHR11604">
    <property type="entry name" value="PROFILIN"/>
    <property type="match status" value="1"/>
</dbReference>
<dbReference type="PANTHER" id="PTHR11604:SF25">
    <property type="entry name" value="PROFILIN-5"/>
    <property type="match status" value="1"/>
</dbReference>
<dbReference type="Pfam" id="PF00235">
    <property type="entry name" value="Profilin"/>
    <property type="match status" value="1"/>
</dbReference>
<dbReference type="PRINTS" id="PR00392">
    <property type="entry name" value="PROFILIN"/>
</dbReference>
<dbReference type="PRINTS" id="PR01640">
    <property type="entry name" value="PROFILINPLNT"/>
</dbReference>
<dbReference type="SMART" id="SM00392">
    <property type="entry name" value="PROF"/>
    <property type="match status" value="1"/>
</dbReference>
<dbReference type="SUPFAM" id="SSF55770">
    <property type="entry name" value="Profilin (actin-binding protein)"/>
    <property type="match status" value="1"/>
</dbReference>
<dbReference type="PROSITE" id="PS00414">
    <property type="entry name" value="PROFILIN"/>
    <property type="match status" value="1"/>
</dbReference>
<proteinExistence type="evidence at protein level"/>
<name>PROAD_OLEEU</name>
<organism>
    <name type="scientific">Olea europaea</name>
    <name type="common">Common olive</name>
    <dbReference type="NCBI Taxonomy" id="4146"/>
    <lineage>
        <taxon>Eukaryota</taxon>
        <taxon>Viridiplantae</taxon>
        <taxon>Streptophyta</taxon>
        <taxon>Embryophyta</taxon>
        <taxon>Tracheophyta</taxon>
        <taxon>Spermatophyta</taxon>
        <taxon>Magnoliopsida</taxon>
        <taxon>eudicotyledons</taxon>
        <taxon>Gunneridae</taxon>
        <taxon>Pentapetalae</taxon>
        <taxon>asterids</taxon>
        <taxon>lamiids</taxon>
        <taxon>Lamiales</taxon>
        <taxon>Oleaceae</taxon>
        <taxon>Oleeae</taxon>
        <taxon>Olea</taxon>
    </lineage>
</organism>
<accession>P0DKE8</accession>
<accession>A4GD57</accession>
<reference key="1">
    <citation type="journal article" date="2012" name="PLoS ONE">
        <title>Characterization of profilin polymorphism in pollen with a focus on multifunctionality.</title>
        <authorList>
            <person name="Jimenez-Lopez J.C."/>
            <person name="Morales S."/>
            <person name="Castro A.J."/>
            <person name="Volkmann D."/>
            <person name="Rodriguez-Garcia M.I."/>
            <person name="Alche Jde D."/>
        </authorList>
    </citation>
    <scope>NUCLEOTIDE SEQUENCE [MRNA]</scope>
    <scope>POLYMORPHISM</scope>
    <source>
        <strain>cv. Cornicabra</strain>
        <tissue>Pollen</tissue>
    </source>
</reference>
<reference key="2">
    <citation type="journal article" date="2013" name="PLoS ONE">
        <title>Analysis of the effects of polymorphism on pollen profilin structural functionality and the generation of conformational, T- and B-cell epitopes.</title>
        <authorList>
            <person name="Jimenez-Lopez J.C."/>
            <person name="Rodriguez-Garcia M.I."/>
            <person name="Alche J.D."/>
        </authorList>
    </citation>
    <scope>3D-STRUCTURE MODELING</scope>
    <scope>DISULFIDE BOND</scope>
</reference>
<keyword id="KW-0009">Actin-binding</keyword>
<keyword id="KW-0020">Allergen</keyword>
<keyword id="KW-0963">Cytoplasm</keyword>
<keyword id="KW-0206">Cytoskeleton</keyword>
<keyword id="KW-1015">Disulfide bond</keyword>
<keyword id="KW-0597">Phosphoprotein</keyword>
<protein>
    <recommendedName>
        <fullName>Profilin-1</fullName>
    </recommendedName>
    <alternativeName>
        <fullName>Pollen allergen Ole e 2</fullName>
    </alternativeName>
    <allergenName>Ole e 2</allergenName>
</protein>
<evidence type="ECO:0000250" key="1"/>
<evidence type="ECO:0000305" key="2"/>
<evidence type="ECO:0000305" key="3">
    <source>
    </source>
</evidence>
<feature type="initiator methionine" description="Removed" evidence="1">
    <location>
        <position position="1"/>
    </location>
</feature>
<feature type="chain" id="PRO_0000424995" description="Profilin-1">
    <location>
        <begin position="2"/>
        <end position="134"/>
    </location>
</feature>
<feature type="short sequence motif" description="Involved in PIP2 interaction">
    <location>
        <begin position="84"/>
        <end position="100"/>
    </location>
</feature>
<feature type="modified residue" description="Phosphothreonine" evidence="1">
    <location>
        <position position="114"/>
    </location>
</feature>
<feature type="disulfide bond" evidence="3">
    <location>
        <begin position="13"/>
        <end position="118"/>
    </location>
</feature>
<sequence length="134" mass="14383">MSWQAYVDDHLMCDIEGHEGHRLTAAAIVGHDGSVWAQSATFPQFKPEEMNGIMTDFNEPGHLAPTGLHLGGTKYMVIQGEAGAVIRGKKGSGGITIKKTGQALVCGIYEEPVTPGQCNMVVERLGDYLLEQGL</sequence>
<comment type="function">
    <text evidence="1">Binds to actin and affects the structure of the cytoskeleton. At high concentrations, profilin prevents the polymerization of actin, whereas it enhances it at low concentrations (By similarity).</text>
</comment>
<comment type="subunit">
    <text evidence="1">Occurs in many kinds of cells as a complex with monomeric actin in a 1:1 ratio.</text>
</comment>
<comment type="subcellular location">
    <subcellularLocation>
        <location evidence="1">Cytoplasm</location>
        <location evidence="1">Cytoskeleton</location>
    </subcellularLocation>
</comment>
<comment type="PTM">
    <text evidence="1">Phosphorylated by MAP kinases.</text>
</comment>
<comment type="polymorphism">
    <text>Several isoforms of the allergen exist due to polymorphism.</text>
</comment>
<comment type="allergen">
    <text>Causes an allergic reaction in human.</text>
</comment>
<comment type="miscellaneous">
    <text evidence="3">The variability of the residues taking part of IgE-binding epitopes might be responsible of the difference in cross-reactivity among olive pollen cultivars, and between distantly related pollen species, leading to a variable range of allergy reactions among atopic patients.</text>
</comment>
<comment type="similarity">
    <text evidence="2">Belongs to the profilin family.</text>
</comment>